<comment type="function">
    <text evidence="5">Inclusion membrane protein probably involved in early modification events of the chlamydial inclusion.</text>
</comment>
<comment type="subcellular location">
    <subcellularLocation>
        <location evidence="5">Secreted</location>
    </subcellularLocation>
    <subcellularLocation>
        <location evidence="2 3">Host vacuole</location>
        <location evidence="2 3">Host pathogen-containing vacuole</location>
        <location evidence="2 3">Host pathogen-containing vacuole membrane</location>
        <topology evidence="1">Multi-pass membrane protein</topology>
    </subcellularLocation>
    <text evidence="2 3 5">Secreted, probably by a type III secretion system (Probable). Localized in the inclusion membrane (PubMed:10447885, PubMed:26416906). Inclusion membrane staining is punctate (PubMed:10447885).</text>
</comment>
<comment type="developmental stage">
    <text evidence="2">Present in reticulate bodies (RB) not detected in elementary bodies (EB) (at protein level).</text>
</comment>
<comment type="induction">
    <text evidence="2">Cotranscribed with incD, incF and incG within 2 hours after internalization.</text>
</comment>
<proteinExistence type="evidence at protein level"/>
<protein>
    <recommendedName>
        <fullName evidence="4">Inclusion membrane protein E</fullName>
    </recommendedName>
</protein>
<gene>
    <name evidence="4" type="primary">incE</name>
    <name type="ordered locus">CTL0371</name>
</gene>
<name>INCE_CHLT2</name>
<organism>
    <name type="scientific">Chlamydia trachomatis serovar L2 (strain ATCC VR-902B / DSM 19102 / 434/Bu)</name>
    <dbReference type="NCBI Taxonomy" id="471472"/>
    <lineage>
        <taxon>Bacteria</taxon>
        <taxon>Pseudomonadati</taxon>
        <taxon>Chlamydiota</taxon>
        <taxon>Chlamydiia</taxon>
        <taxon>Chlamydiales</taxon>
        <taxon>Chlamydiaceae</taxon>
        <taxon>Chlamydia/Chlamydophila group</taxon>
        <taxon>Chlamydia</taxon>
    </lineage>
</organism>
<reference key="1">
    <citation type="journal article" date="1999" name="Mol. Microbiol.">
        <title>Identification and characterization of a Chlamydia trachomatis early operon encoding four novel inclusion membrane proteins.</title>
        <authorList>
            <person name="Scidmore-Carlson M.A."/>
            <person name="Shaw E.I."/>
            <person name="Dooley C.A."/>
            <person name="Fischer E.R."/>
            <person name="Hackstadt T."/>
        </authorList>
    </citation>
    <scope>NUCLEOTIDE SEQUENCE [GENOMIC DNA]</scope>
    <scope>FUNCTION</scope>
    <scope>SUBCELLULAR LOCATION</scope>
    <scope>DEVELOPMENTAL STAGE</scope>
    <scope>INDUCTION</scope>
    <source>
        <strain>ATCC VR-902B / DSM 19102 / 434/Bu</strain>
    </source>
</reference>
<reference key="2">
    <citation type="journal article" date="2008" name="Genome Res.">
        <title>Chlamydia trachomatis: genome sequence analysis of lymphogranuloma venereum isolates.</title>
        <authorList>
            <person name="Thomson N.R."/>
            <person name="Holden M.T.G."/>
            <person name="Carder C."/>
            <person name="Lennard N."/>
            <person name="Lockey S.J."/>
            <person name="Marsh P."/>
            <person name="Skipp P."/>
            <person name="O'Connor C.D."/>
            <person name="Goodhead I."/>
            <person name="Norbertzcak H."/>
            <person name="Harris B."/>
            <person name="Ormond D."/>
            <person name="Rance R."/>
            <person name="Quail M.A."/>
            <person name="Parkhill J."/>
            <person name="Stephens R.S."/>
            <person name="Clarke I.N."/>
        </authorList>
    </citation>
    <scope>NUCLEOTIDE SEQUENCE [LARGE SCALE GENOMIC DNA]</scope>
    <source>
        <strain>ATCC VR-902B / DSM 19102 / 434/Bu</strain>
    </source>
</reference>
<reference key="3">
    <citation type="journal article" date="2015" name="Infect. Immun.">
        <title>Expression and localization of predicted inclusion membrane proteins in Chlamydia trachomatis.</title>
        <authorList>
            <person name="Weber M.M."/>
            <person name="Bauler L.D."/>
            <person name="Lam J."/>
            <person name="Hackstadt T."/>
        </authorList>
    </citation>
    <scope>SUBCELLULAR LOCATION</scope>
    <source>
        <strain>ATCC VR-902B / DSM 19102 / 434/Bu</strain>
    </source>
</reference>
<evidence type="ECO:0000255" key="1"/>
<evidence type="ECO:0000269" key="2">
    <source>
    </source>
</evidence>
<evidence type="ECO:0000269" key="3">
    <source>
    </source>
</evidence>
<evidence type="ECO:0000303" key="4">
    <source>
    </source>
</evidence>
<evidence type="ECO:0000305" key="5">
    <source>
    </source>
</evidence>
<accession>B0B9M4</accession>
<accession>O84118</accession>
<accession>Q9RPQ0</accession>
<dbReference type="EMBL" id="AF151374">
    <property type="protein sequence ID" value="AAD43975.1"/>
    <property type="molecule type" value="Genomic_DNA"/>
</dbReference>
<dbReference type="EMBL" id="AM884176">
    <property type="protein sequence ID" value="CAP03811.1"/>
    <property type="molecule type" value="Genomic_DNA"/>
</dbReference>
<dbReference type="RefSeq" id="WP_009873571.1">
    <property type="nucleotide sequence ID" value="NC_010287.1"/>
</dbReference>
<dbReference type="RefSeq" id="YP_001654455.1">
    <property type="nucleotide sequence ID" value="NC_010287.1"/>
</dbReference>
<dbReference type="SMR" id="B0B9M4"/>
<dbReference type="IntAct" id="B0B9M4">
    <property type="interactions" value="1"/>
</dbReference>
<dbReference type="MINT" id="B0B9M4"/>
<dbReference type="KEGG" id="ctb:CTL0371"/>
<dbReference type="PATRIC" id="fig|471472.4.peg.402"/>
<dbReference type="HOGENOM" id="CLU_1913351_0_0_0"/>
<dbReference type="Proteomes" id="UP001154402">
    <property type="component" value="Chromosome"/>
</dbReference>
<dbReference type="GO" id="GO:0005576">
    <property type="term" value="C:extracellular region"/>
    <property type="evidence" value="ECO:0007669"/>
    <property type="project" value="UniProtKB-SubCell"/>
</dbReference>
<dbReference type="GO" id="GO:0033644">
    <property type="term" value="C:host cell membrane"/>
    <property type="evidence" value="ECO:0007669"/>
    <property type="project" value="UniProtKB-KW"/>
</dbReference>
<dbReference type="GO" id="GO:0140221">
    <property type="term" value="C:pathogen-containing vacuole membrane"/>
    <property type="evidence" value="ECO:0000314"/>
    <property type="project" value="UniProtKB"/>
</dbReference>
<dbReference type="InterPro" id="IPR035118">
    <property type="entry name" value="IncE"/>
</dbReference>
<dbReference type="Pfam" id="PF17627">
    <property type="entry name" value="IncE"/>
    <property type="match status" value="1"/>
</dbReference>
<feature type="chain" id="PRO_0000417580" description="Inclusion membrane protein E">
    <location>
        <begin position="1"/>
        <end position="132"/>
    </location>
</feature>
<feature type="transmembrane region" description="Helical" evidence="1">
    <location>
        <begin position="41"/>
        <end position="61"/>
    </location>
</feature>
<feature type="transmembrane region" description="Helical" evidence="1">
    <location>
        <begin position="66"/>
        <end position="86"/>
    </location>
</feature>
<keyword id="KW-1043">Host membrane</keyword>
<keyword id="KW-0472">Membrane</keyword>
<keyword id="KW-0964">Secreted</keyword>
<keyword id="KW-0812">Transmembrane</keyword>
<keyword id="KW-1133">Transmembrane helix</keyword>
<keyword id="KW-0843">Virulence</keyword>
<sequence>MECVKQLCRNHLRLDNLTDPVRSVLTKGTTAEKVQLAACCLGVVCSIICLALGIAAAAVGVSCGGFALGLGIIAILLGIVLFATSALDVLENHGLVGCPFKLPCKSSPANEPAVQFFKGKNGSADQVILVTQ</sequence>